<accession>Q800R2</accession>
<accession>P56226</accession>
<comment type="function">
    <molecule>Caerin-1.1</molecule>
    <text evidence="1 2">Antimicrobial peptide with antibacterial and antiviral activities (By similarity). Adopts an alpha helical conformation which can disrupt bacterial membranes (By similarity). Inhibits the formation of NO by neuronal nitric oxide synthase (nNOS) at micromolar concentrations (By similarity). Acts by a non-competitive mechanism, probably by binding to calcium/calmodulin and as a consequence blocking calmodulin attachment to nNOS (By similarity).</text>
</comment>
<comment type="function">
    <molecule>Caerin-1.1.1</molecule>
    <text evidence="1">Is inactive.</text>
</comment>
<comment type="function">
    <molecule>Caerin-1.1.4</molecule>
    <text evidence="1">Is inactive.</text>
</comment>
<comment type="subcellular location">
    <subcellularLocation>
        <location evidence="5">Secreted</location>
    </subcellularLocation>
</comment>
<comment type="tissue specificity">
    <text evidence="9">Expressed by the skin parotoid and/or rostral glands.</text>
</comment>
<comment type="domain">
    <text>Contains two amphipathic alpha helix regions separated by a region of less-defined helicity and greater flexibility.</text>
</comment>
<comment type="PTM">
    <text>The major product is Caerin-1.1; in addition, different peptides are produced that are missing some amino acid residues at the N-terminus or C-terminus. Caerin-1.1.1 and Caerin-1.1.4 are inactive.</text>
</comment>
<comment type="mass spectrometry" mass="2582.0" method="FAB" evidence="5">
    <molecule>Caerin-1.1</molecule>
</comment>
<comment type="mass spectrometry" mass="2412.0" method="FAB" evidence="5">
    <molecule>Caerin-1.1.1</molecule>
</comment>
<comment type="mass spectrometry" mass="2299.0" method="FAB" evidence="5">
    <molecule>Caerin-1.1.2</molecule>
</comment>
<comment type="mass spectrometry" mass="2333.0" method="FAB" evidence="5">
    <molecule>Caerin-1.1.4</molecule>
</comment>
<comment type="similarity">
    <text evidence="8">Belongs to the frog skin active peptide (FSAP) family. Caerin subfamily.</text>
</comment>
<name>CR11_RANCA</name>
<proteinExistence type="evidence at protein level"/>
<keyword id="KW-0027">Amidation</keyword>
<keyword id="KW-0878">Amphibian defense peptide</keyword>
<keyword id="KW-0044">Antibiotic</keyword>
<keyword id="KW-0929">Antimicrobial</keyword>
<keyword id="KW-0051">Antiviral defense</keyword>
<keyword id="KW-0165">Cleavage on pair of basic residues</keyword>
<keyword id="KW-0903">Direct protein sequencing</keyword>
<keyword id="KW-0391">Immunity</keyword>
<keyword id="KW-0399">Innate immunity</keyword>
<keyword id="KW-0964">Secreted</keyword>
<keyword id="KW-0732">Signal</keyword>
<evidence type="ECO:0000250" key="1">
    <source>
        <dbReference type="UniProtKB" id="P62568"/>
    </source>
</evidence>
<evidence type="ECO:0000250" key="2">
    <source>
        <dbReference type="UniProtKB" id="P81252"/>
    </source>
</evidence>
<evidence type="ECO:0000255" key="3"/>
<evidence type="ECO:0000256" key="4">
    <source>
        <dbReference type="SAM" id="MobiDB-lite"/>
    </source>
</evidence>
<evidence type="ECO:0000269" key="5">
    <source ref="2"/>
</evidence>
<evidence type="ECO:0000303" key="6">
    <source>
    </source>
</evidence>
<evidence type="ECO:0000303" key="7">
    <source ref="2"/>
</evidence>
<evidence type="ECO:0000305" key="8"/>
<evidence type="ECO:0000305" key="9">
    <source ref="2"/>
</evidence>
<reference key="1">
    <citation type="journal article" date="2003" name="Eur. J. Biochem.">
        <title>Antimicrobial peptides from hylid and ranin frogs originated from a 150-million-year-old ancestral precursor with a conserved signal peptide but a hypermutable antimicrobial domain.</title>
        <authorList>
            <person name="Vanhoye D."/>
            <person name="Bruston F."/>
            <person name="Nicolas P."/>
            <person name="Amiche M."/>
        </authorList>
    </citation>
    <scope>NUCLEOTIDE SEQUENCE [MRNA]</scope>
    <source>
        <tissue>Skin</tissue>
    </source>
</reference>
<reference key="2">
    <citation type="journal article" date="1993" name="J. Chem. Res.">
        <title>Peptides from Australian frogs. The structures of the caerins from Litoria caerula.</title>
        <authorList>
            <person name="Stone D.J.M."/>
            <person name="Waugh R.J."/>
            <person name="Bowie J.H."/>
            <person name="Wallace J.C."/>
            <person name="Tyler M.J."/>
        </authorList>
    </citation>
    <scope>PROTEIN SEQUENCE OF 50-74</scope>
    <scope>AMIDATION AT LEU-74</scope>
    <scope>MASS SPECTROMETRY</scope>
    <scope>SUBCELLULAR LOCATION</scope>
    <source>
        <tissue>Parotoid gland</tissue>
    </source>
</reference>
<protein>
    <recommendedName>
        <fullName evidence="6">Caerin-1.1</fullName>
    </recommendedName>
    <component>
        <recommendedName>
            <fullName evidence="7">Caerin-1.1.1</fullName>
        </recommendedName>
    </component>
    <component>
        <recommendedName>
            <fullName evidence="7">Caerin-1.1.2</fullName>
        </recommendedName>
    </component>
    <component>
        <recommendedName>
            <fullName evidence="7">Caerin-1.1.4</fullName>
        </recommendedName>
    </component>
</protein>
<dbReference type="EMBL" id="AY218785">
    <property type="protein sequence ID" value="AAO62960.1"/>
    <property type="molecule type" value="mRNA"/>
</dbReference>
<dbReference type="TCDB" id="1.C.52.1.9">
    <property type="family name" value="the dermaseptin (dermaseptin) family"/>
</dbReference>
<dbReference type="GO" id="GO:0005576">
    <property type="term" value="C:extracellular region"/>
    <property type="evidence" value="ECO:0007669"/>
    <property type="project" value="UniProtKB-SubCell"/>
</dbReference>
<dbReference type="GO" id="GO:0042742">
    <property type="term" value="P:defense response to bacterium"/>
    <property type="evidence" value="ECO:0007669"/>
    <property type="project" value="UniProtKB-KW"/>
</dbReference>
<dbReference type="GO" id="GO:0051607">
    <property type="term" value="P:defense response to virus"/>
    <property type="evidence" value="ECO:0007669"/>
    <property type="project" value="UniProtKB-KW"/>
</dbReference>
<dbReference type="GO" id="GO:0045087">
    <property type="term" value="P:innate immune response"/>
    <property type="evidence" value="ECO:0007669"/>
    <property type="project" value="UniProtKB-KW"/>
</dbReference>
<dbReference type="InterPro" id="IPR010000">
    <property type="entry name" value="Caerin_1"/>
</dbReference>
<dbReference type="InterPro" id="IPR004275">
    <property type="entry name" value="Frog_antimicrobial_propeptide"/>
</dbReference>
<dbReference type="InterPro" id="IPR016322">
    <property type="entry name" value="FSAP"/>
</dbReference>
<dbReference type="Pfam" id="PF07440">
    <property type="entry name" value="Caerin_1"/>
    <property type="match status" value="1"/>
</dbReference>
<dbReference type="Pfam" id="PF03032">
    <property type="entry name" value="FSAP_sig_propep"/>
    <property type="match status" value="1"/>
</dbReference>
<dbReference type="PIRSF" id="PIRSF001822">
    <property type="entry name" value="Dermaseptin_precursor"/>
    <property type="match status" value="1"/>
</dbReference>
<feature type="signal peptide" evidence="3">
    <location>
        <begin position="1"/>
        <end position="22"/>
    </location>
</feature>
<feature type="propeptide" id="PRO_0000010159" evidence="9">
    <location>
        <begin position="23"/>
        <end position="49"/>
    </location>
</feature>
<feature type="peptide" id="PRO_0000010160" description="Caerin-1.1" evidence="5">
    <location>
        <begin position="50"/>
        <end position="74"/>
    </location>
</feature>
<feature type="peptide" id="PRO_0000010161" description="Caerin-1.1.4" evidence="5">
    <location>
        <begin position="50"/>
        <end position="72"/>
    </location>
</feature>
<feature type="peptide" id="PRO_0000010162" description="Caerin-1.1.1" evidence="5">
    <location>
        <begin position="52"/>
        <end position="74"/>
    </location>
</feature>
<feature type="peptide" id="PRO_0000010163" description="Caerin-1.1.2" evidence="5">
    <location>
        <begin position="53"/>
        <end position="74"/>
    </location>
</feature>
<feature type="region of interest" description="Disordered" evidence="4">
    <location>
        <begin position="24"/>
        <end position="49"/>
    </location>
</feature>
<feature type="compositionally biased region" description="Acidic residues" evidence="4">
    <location>
        <begin position="30"/>
        <end position="45"/>
    </location>
</feature>
<feature type="modified residue" description="Leucine amide" evidence="5">
    <location>
        <position position="74"/>
    </location>
</feature>
<organism>
    <name type="scientific">Ranoidea caerulea</name>
    <name type="common">Green tree frog</name>
    <name type="synonym">Litoria caerulea</name>
    <dbReference type="NCBI Taxonomy" id="30344"/>
    <lineage>
        <taxon>Eukaryota</taxon>
        <taxon>Metazoa</taxon>
        <taxon>Chordata</taxon>
        <taxon>Craniata</taxon>
        <taxon>Vertebrata</taxon>
        <taxon>Euteleostomi</taxon>
        <taxon>Amphibia</taxon>
        <taxon>Batrachia</taxon>
        <taxon>Anura</taxon>
        <taxon>Neobatrachia</taxon>
        <taxon>Hyloidea</taxon>
        <taxon>Hylidae</taxon>
        <taxon>Pelodryadinae</taxon>
        <taxon>Ranoidea</taxon>
    </lineage>
</organism>
<sequence length="75" mass="8281">MASLKKSLFLVLLLGFVSVSICEEEKRQEDEDEHEEEGESQEEGSEEKRGLLSVLGSVAKHVLPHVVPVIAEHLG</sequence>